<name>DEOC_ALIFM</name>
<keyword id="KW-0963">Cytoplasm</keyword>
<keyword id="KW-0456">Lyase</keyword>
<keyword id="KW-0704">Schiff base</keyword>
<proteinExistence type="inferred from homology"/>
<comment type="function">
    <text evidence="1">Catalyzes a reversible aldol reaction between acetaldehyde and D-glyceraldehyde 3-phosphate to generate 2-deoxy-D-ribose 5-phosphate.</text>
</comment>
<comment type="catalytic activity">
    <reaction evidence="1">
        <text>2-deoxy-D-ribose 5-phosphate = D-glyceraldehyde 3-phosphate + acetaldehyde</text>
        <dbReference type="Rhea" id="RHEA:12821"/>
        <dbReference type="ChEBI" id="CHEBI:15343"/>
        <dbReference type="ChEBI" id="CHEBI:59776"/>
        <dbReference type="ChEBI" id="CHEBI:62877"/>
        <dbReference type="EC" id="4.1.2.4"/>
    </reaction>
</comment>
<comment type="pathway">
    <text evidence="1">Carbohydrate degradation; 2-deoxy-D-ribose 1-phosphate degradation; D-glyceraldehyde 3-phosphate and acetaldehyde from 2-deoxy-alpha-D-ribose 1-phosphate: step 2/2.</text>
</comment>
<comment type="subcellular location">
    <subcellularLocation>
        <location evidence="1">Cytoplasm</location>
    </subcellularLocation>
</comment>
<comment type="similarity">
    <text evidence="1">Belongs to the DeoC/FbaB aldolase family. DeoC type 2 subfamily.</text>
</comment>
<feature type="chain" id="PRO_1000129816" description="Deoxyribose-phosphate aldolase">
    <location>
        <begin position="1"/>
        <end position="258"/>
    </location>
</feature>
<feature type="active site" description="Proton donor/acceptor" evidence="1">
    <location>
        <position position="102"/>
    </location>
</feature>
<feature type="active site" description="Schiff-base intermediate with acetaldehyde" evidence="1">
    <location>
        <position position="165"/>
    </location>
</feature>
<feature type="active site" description="Proton donor/acceptor" evidence="1">
    <location>
        <position position="199"/>
    </location>
</feature>
<gene>
    <name evidence="1" type="primary">deoC</name>
    <name type="ordered locus">VFMJ11_0506</name>
</gene>
<evidence type="ECO:0000255" key="1">
    <source>
        <dbReference type="HAMAP-Rule" id="MF_00592"/>
    </source>
</evidence>
<accession>B5FA98</accession>
<dbReference type="EC" id="4.1.2.4" evidence="1"/>
<dbReference type="EMBL" id="CP001139">
    <property type="protein sequence ID" value="ACH65233.1"/>
    <property type="molecule type" value="Genomic_DNA"/>
</dbReference>
<dbReference type="RefSeq" id="WP_012532913.1">
    <property type="nucleotide sequence ID" value="NC_011184.1"/>
</dbReference>
<dbReference type="SMR" id="B5FA98"/>
<dbReference type="KEGG" id="vfm:VFMJ11_0506"/>
<dbReference type="HOGENOM" id="CLU_053595_3_1_6"/>
<dbReference type="UniPathway" id="UPA00002">
    <property type="reaction ID" value="UER00468"/>
</dbReference>
<dbReference type="Proteomes" id="UP000001857">
    <property type="component" value="Chromosome I"/>
</dbReference>
<dbReference type="GO" id="GO:0005737">
    <property type="term" value="C:cytoplasm"/>
    <property type="evidence" value="ECO:0007669"/>
    <property type="project" value="UniProtKB-SubCell"/>
</dbReference>
<dbReference type="GO" id="GO:0004139">
    <property type="term" value="F:deoxyribose-phosphate aldolase activity"/>
    <property type="evidence" value="ECO:0007669"/>
    <property type="project" value="UniProtKB-UniRule"/>
</dbReference>
<dbReference type="GO" id="GO:0006018">
    <property type="term" value="P:2-deoxyribose 1-phosphate catabolic process"/>
    <property type="evidence" value="ECO:0007669"/>
    <property type="project" value="UniProtKB-UniRule"/>
</dbReference>
<dbReference type="GO" id="GO:0016052">
    <property type="term" value="P:carbohydrate catabolic process"/>
    <property type="evidence" value="ECO:0007669"/>
    <property type="project" value="TreeGrafter"/>
</dbReference>
<dbReference type="GO" id="GO:0009264">
    <property type="term" value="P:deoxyribonucleotide catabolic process"/>
    <property type="evidence" value="ECO:0007669"/>
    <property type="project" value="InterPro"/>
</dbReference>
<dbReference type="CDD" id="cd00959">
    <property type="entry name" value="DeoC"/>
    <property type="match status" value="1"/>
</dbReference>
<dbReference type="FunFam" id="3.20.20.70:FF:000034">
    <property type="entry name" value="Deoxyribose-phosphate aldolase"/>
    <property type="match status" value="1"/>
</dbReference>
<dbReference type="Gene3D" id="3.20.20.70">
    <property type="entry name" value="Aldolase class I"/>
    <property type="match status" value="1"/>
</dbReference>
<dbReference type="HAMAP" id="MF_00592">
    <property type="entry name" value="DeoC_type2"/>
    <property type="match status" value="1"/>
</dbReference>
<dbReference type="InterPro" id="IPR013785">
    <property type="entry name" value="Aldolase_TIM"/>
</dbReference>
<dbReference type="InterPro" id="IPR011343">
    <property type="entry name" value="DeoC"/>
</dbReference>
<dbReference type="InterPro" id="IPR002915">
    <property type="entry name" value="DeoC/FbaB/LacD_aldolase"/>
</dbReference>
<dbReference type="InterPro" id="IPR023649">
    <property type="entry name" value="DeoC_typeII"/>
</dbReference>
<dbReference type="NCBIfam" id="TIGR00126">
    <property type="entry name" value="deoC"/>
    <property type="match status" value="1"/>
</dbReference>
<dbReference type="PANTHER" id="PTHR10889">
    <property type="entry name" value="DEOXYRIBOSE-PHOSPHATE ALDOLASE"/>
    <property type="match status" value="1"/>
</dbReference>
<dbReference type="PANTHER" id="PTHR10889:SF3">
    <property type="entry name" value="DEOXYRIBOSE-PHOSPHATE ALDOLASE"/>
    <property type="match status" value="1"/>
</dbReference>
<dbReference type="Pfam" id="PF01791">
    <property type="entry name" value="DeoC"/>
    <property type="match status" value="1"/>
</dbReference>
<dbReference type="PIRSF" id="PIRSF001357">
    <property type="entry name" value="DeoC"/>
    <property type="match status" value="1"/>
</dbReference>
<dbReference type="SMART" id="SM01133">
    <property type="entry name" value="DeoC"/>
    <property type="match status" value="1"/>
</dbReference>
<dbReference type="SUPFAM" id="SSF51569">
    <property type="entry name" value="Aldolase"/>
    <property type="match status" value="1"/>
</dbReference>
<protein>
    <recommendedName>
        <fullName evidence="1">Deoxyribose-phosphate aldolase</fullName>
        <shortName evidence="1">DERA</shortName>
        <ecNumber evidence="1">4.1.2.4</ecNumber>
    </recommendedName>
    <alternativeName>
        <fullName evidence="1">2-deoxy-D-ribose 5-phosphate aldolase</fullName>
    </alternativeName>
    <alternativeName>
        <fullName evidence="1">Phosphodeoxyriboaldolase</fullName>
        <shortName evidence="1">Deoxyriboaldolase</shortName>
    </alternativeName>
</protein>
<organism>
    <name type="scientific">Aliivibrio fischeri (strain MJ11)</name>
    <name type="common">Vibrio fischeri</name>
    <dbReference type="NCBI Taxonomy" id="388396"/>
    <lineage>
        <taxon>Bacteria</taxon>
        <taxon>Pseudomonadati</taxon>
        <taxon>Pseudomonadota</taxon>
        <taxon>Gammaproteobacteria</taxon>
        <taxon>Vibrionales</taxon>
        <taxon>Vibrionaceae</taxon>
        <taxon>Aliivibrio</taxon>
    </lineage>
</organism>
<reference key="1">
    <citation type="submission" date="2008-08" db="EMBL/GenBank/DDBJ databases">
        <title>Complete sequence of Vibrio fischeri strain MJ11.</title>
        <authorList>
            <person name="Mandel M.J."/>
            <person name="Stabb E.V."/>
            <person name="Ruby E.G."/>
            <person name="Ferriera S."/>
            <person name="Johnson J."/>
            <person name="Kravitz S."/>
            <person name="Beeson K."/>
            <person name="Sutton G."/>
            <person name="Rogers Y.-H."/>
            <person name="Friedman R."/>
            <person name="Frazier M."/>
            <person name="Venter J.C."/>
        </authorList>
    </citation>
    <scope>NUCLEOTIDE SEQUENCE [LARGE SCALE GENOMIC DNA]</scope>
    <source>
        <strain>MJ11</strain>
    </source>
</reference>
<sequence>MSDLKAAALRALKLMDLTTLNDNDTDEAVIALCKNAKTAVGNTAAVCIYPRFIPIAKKTLREQGTPEVRIATVTNFPHGNDDIEIAVAETKAAVAYGADEVDVVFPYRALIAGDETTGFELVKQCKEACGDVLLKVIIETGELKEEALIKKASQICIEAGANFIKTSTGKVPVNATPEYARMMLEVIRDMDVAKTVGFKPAGGVRTAEDAQAYLAMADEILGDDWADNMHYRFGASSLLTNLLNTLEVTEETADPSAY</sequence>